<sequence>MTKPIVAIVGKPNVGKSTIFNRVVGERISIVEDTPGVTRDRIYSSGEWLTHEFNIIDTGGIEIGDAPFQTQIRAQAEIAIEEADVIIFMVNVREGLTQSDEMVAQMLYKSKKPVVLAVNKVDNLEMRNDIYDFYSLGFGDPYPISGSHGLGLGDLLDAVVENFNKESEDPYDEDTIRLSIIGRPNVGKSSLVNAILGEERVIVSNVAGTTRDAIDTEYSYDGQDYVLIDTAGMRKKGKVYESTEKYSVLRALKAIERSEVVLVVIDAEQGIIEQDKRVAGYAHEEGKAIVIVVNKWDTVEKDSKTMKKFTDDVRNEFQFLDYAQIAFVSAKEGLRLKTLFPYINQASENHKKRVQSSTLNEVVTDAISMNPTPTDKGRRLNVFYTTQVAIEPPTFVVFVNDVELMHFSYRRYLENQIRNAFGFEGTPIHIIPRKRN</sequence>
<dbReference type="EMBL" id="AE015929">
    <property type="protein sequence ID" value="AAO04760.1"/>
    <property type="molecule type" value="Genomic_DNA"/>
</dbReference>
<dbReference type="RefSeq" id="NP_764718.1">
    <property type="nucleotide sequence ID" value="NC_004461.1"/>
</dbReference>
<dbReference type="RefSeq" id="WP_001831042.1">
    <property type="nucleotide sequence ID" value="NZ_WBME01000006.1"/>
</dbReference>
<dbReference type="SMR" id="Q8CP62"/>
<dbReference type="GeneID" id="50018716"/>
<dbReference type="KEGG" id="sep:SE_1163"/>
<dbReference type="PATRIC" id="fig|176280.10.peg.1135"/>
<dbReference type="eggNOG" id="COG1160">
    <property type="taxonomic scope" value="Bacteria"/>
</dbReference>
<dbReference type="HOGENOM" id="CLU_016077_6_2_9"/>
<dbReference type="OrthoDB" id="9805918at2"/>
<dbReference type="Proteomes" id="UP000001411">
    <property type="component" value="Chromosome"/>
</dbReference>
<dbReference type="GO" id="GO:0005525">
    <property type="term" value="F:GTP binding"/>
    <property type="evidence" value="ECO:0007669"/>
    <property type="project" value="UniProtKB-UniRule"/>
</dbReference>
<dbReference type="GO" id="GO:0043022">
    <property type="term" value="F:ribosome binding"/>
    <property type="evidence" value="ECO:0007669"/>
    <property type="project" value="TreeGrafter"/>
</dbReference>
<dbReference type="GO" id="GO:0042254">
    <property type="term" value="P:ribosome biogenesis"/>
    <property type="evidence" value="ECO:0007669"/>
    <property type="project" value="UniProtKB-KW"/>
</dbReference>
<dbReference type="CDD" id="cd01894">
    <property type="entry name" value="EngA1"/>
    <property type="match status" value="1"/>
</dbReference>
<dbReference type="CDD" id="cd01895">
    <property type="entry name" value="EngA2"/>
    <property type="match status" value="1"/>
</dbReference>
<dbReference type="FunFam" id="3.30.300.20:FF:000004">
    <property type="entry name" value="GTPase Der"/>
    <property type="match status" value="1"/>
</dbReference>
<dbReference type="FunFam" id="3.40.50.300:FF:000040">
    <property type="entry name" value="GTPase Der"/>
    <property type="match status" value="1"/>
</dbReference>
<dbReference type="FunFam" id="3.40.50.300:FF:000057">
    <property type="entry name" value="GTPase Der"/>
    <property type="match status" value="1"/>
</dbReference>
<dbReference type="Gene3D" id="3.30.300.20">
    <property type="match status" value="1"/>
</dbReference>
<dbReference type="Gene3D" id="3.40.50.300">
    <property type="entry name" value="P-loop containing nucleotide triphosphate hydrolases"/>
    <property type="match status" value="2"/>
</dbReference>
<dbReference type="HAMAP" id="MF_00195">
    <property type="entry name" value="GTPase_Der"/>
    <property type="match status" value="1"/>
</dbReference>
<dbReference type="InterPro" id="IPR031166">
    <property type="entry name" value="G_ENGA"/>
</dbReference>
<dbReference type="InterPro" id="IPR006073">
    <property type="entry name" value="GTP-bd"/>
</dbReference>
<dbReference type="InterPro" id="IPR016484">
    <property type="entry name" value="GTPase_Der"/>
</dbReference>
<dbReference type="InterPro" id="IPR032859">
    <property type="entry name" value="KH_dom-like"/>
</dbReference>
<dbReference type="InterPro" id="IPR015946">
    <property type="entry name" value="KH_dom-like_a/b"/>
</dbReference>
<dbReference type="InterPro" id="IPR027417">
    <property type="entry name" value="P-loop_NTPase"/>
</dbReference>
<dbReference type="InterPro" id="IPR005225">
    <property type="entry name" value="Small_GTP-bd"/>
</dbReference>
<dbReference type="NCBIfam" id="TIGR03594">
    <property type="entry name" value="GTPase_EngA"/>
    <property type="match status" value="1"/>
</dbReference>
<dbReference type="NCBIfam" id="TIGR00231">
    <property type="entry name" value="small_GTP"/>
    <property type="match status" value="2"/>
</dbReference>
<dbReference type="PANTHER" id="PTHR43834">
    <property type="entry name" value="GTPASE DER"/>
    <property type="match status" value="1"/>
</dbReference>
<dbReference type="PANTHER" id="PTHR43834:SF6">
    <property type="entry name" value="GTPASE DER"/>
    <property type="match status" value="1"/>
</dbReference>
<dbReference type="Pfam" id="PF14714">
    <property type="entry name" value="KH_dom-like"/>
    <property type="match status" value="1"/>
</dbReference>
<dbReference type="Pfam" id="PF01926">
    <property type="entry name" value="MMR_HSR1"/>
    <property type="match status" value="2"/>
</dbReference>
<dbReference type="PIRSF" id="PIRSF006485">
    <property type="entry name" value="GTP-binding_EngA"/>
    <property type="match status" value="1"/>
</dbReference>
<dbReference type="PRINTS" id="PR00326">
    <property type="entry name" value="GTP1OBG"/>
</dbReference>
<dbReference type="SUPFAM" id="SSF52540">
    <property type="entry name" value="P-loop containing nucleoside triphosphate hydrolases"/>
    <property type="match status" value="2"/>
</dbReference>
<dbReference type="PROSITE" id="PS51712">
    <property type="entry name" value="G_ENGA"/>
    <property type="match status" value="2"/>
</dbReference>
<protein>
    <recommendedName>
        <fullName evidence="1">GTPase Der</fullName>
    </recommendedName>
    <alternativeName>
        <fullName evidence="1">GTP-binding protein EngA</fullName>
    </alternativeName>
</protein>
<gene>
    <name evidence="1" type="primary">der</name>
    <name type="synonym">engA</name>
    <name type="ordered locus">SE_1163</name>
</gene>
<evidence type="ECO:0000255" key="1">
    <source>
        <dbReference type="HAMAP-Rule" id="MF_00195"/>
    </source>
</evidence>
<comment type="function">
    <text evidence="1">GTPase that plays an essential role in the late steps of ribosome biogenesis.</text>
</comment>
<comment type="subunit">
    <text evidence="1">Associates with the 50S ribosomal subunit.</text>
</comment>
<comment type="similarity">
    <text evidence="1">Belongs to the TRAFAC class TrmE-Era-EngA-EngB-Septin-like GTPase superfamily. EngA (Der) GTPase family.</text>
</comment>
<accession>Q8CP62</accession>
<keyword id="KW-0342">GTP-binding</keyword>
<keyword id="KW-0547">Nucleotide-binding</keyword>
<keyword id="KW-0677">Repeat</keyword>
<keyword id="KW-0690">Ribosome biogenesis</keyword>
<organism>
    <name type="scientific">Staphylococcus epidermidis (strain ATCC 12228 / FDA PCI 1200)</name>
    <dbReference type="NCBI Taxonomy" id="176280"/>
    <lineage>
        <taxon>Bacteria</taxon>
        <taxon>Bacillati</taxon>
        <taxon>Bacillota</taxon>
        <taxon>Bacilli</taxon>
        <taxon>Bacillales</taxon>
        <taxon>Staphylococcaceae</taxon>
        <taxon>Staphylococcus</taxon>
    </lineage>
</organism>
<name>DER_STAES</name>
<proteinExistence type="inferred from homology"/>
<feature type="chain" id="PRO_0000179048" description="GTPase Der">
    <location>
        <begin position="1"/>
        <end position="436"/>
    </location>
</feature>
<feature type="domain" description="EngA-type G 1">
    <location>
        <begin position="4"/>
        <end position="167"/>
    </location>
</feature>
<feature type="domain" description="EngA-type G 2">
    <location>
        <begin position="176"/>
        <end position="351"/>
    </location>
</feature>
<feature type="domain" description="KH-like" evidence="1">
    <location>
        <begin position="352"/>
        <end position="436"/>
    </location>
</feature>
<feature type="binding site" evidence="1">
    <location>
        <begin position="10"/>
        <end position="17"/>
    </location>
    <ligand>
        <name>GTP</name>
        <dbReference type="ChEBI" id="CHEBI:37565"/>
        <label>1</label>
    </ligand>
</feature>
<feature type="binding site" evidence="1">
    <location>
        <begin position="57"/>
        <end position="61"/>
    </location>
    <ligand>
        <name>GTP</name>
        <dbReference type="ChEBI" id="CHEBI:37565"/>
        <label>1</label>
    </ligand>
</feature>
<feature type="binding site" evidence="1">
    <location>
        <begin position="119"/>
        <end position="122"/>
    </location>
    <ligand>
        <name>GTP</name>
        <dbReference type="ChEBI" id="CHEBI:37565"/>
        <label>1</label>
    </ligand>
</feature>
<feature type="binding site" evidence="1">
    <location>
        <begin position="182"/>
        <end position="189"/>
    </location>
    <ligand>
        <name>GTP</name>
        <dbReference type="ChEBI" id="CHEBI:37565"/>
        <label>2</label>
    </ligand>
</feature>
<feature type="binding site" evidence="1">
    <location>
        <begin position="229"/>
        <end position="233"/>
    </location>
    <ligand>
        <name>GTP</name>
        <dbReference type="ChEBI" id="CHEBI:37565"/>
        <label>2</label>
    </ligand>
</feature>
<feature type="binding site" evidence="1">
    <location>
        <begin position="294"/>
        <end position="297"/>
    </location>
    <ligand>
        <name>GTP</name>
        <dbReference type="ChEBI" id="CHEBI:37565"/>
        <label>2</label>
    </ligand>
</feature>
<reference key="1">
    <citation type="journal article" date="2003" name="Mol. Microbiol.">
        <title>Genome-based analysis of virulence genes in a non-biofilm-forming Staphylococcus epidermidis strain (ATCC 12228).</title>
        <authorList>
            <person name="Zhang Y.-Q."/>
            <person name="Ren S.-X."/>
            <person name="Li H.-L."/>
            <person name="Wang Y.-X."/>
            <person name="Fu G."/>
            <person name="Yang J."/>
            <person name="Qin Z.-Q."/>
            <person name="Miao Y.-G."/>
            <person name="Wang W.-Y."/>
            <person name="Chen R.-S."/>
            <person name="Shen Y."/>
            <person name="Chen Z."/>
            <person name="Yuan Z.-H."/>
            <person name="Zhao G.-P."/>
            <person name="Qu D."/>
            <person name="Danchin A."/>
            <person name="Wen Y.-M."/>
        </authorList>
    </citation>
    <scope>NUCLEOTIDE SEQUENCE [LARGE SCALE GENOMIC DNA]</scope>
    <source>
        <strain>ATCC 12228 / FDA PCI 1200</strain>
    </source>
</reference>